<gene>
    <name evidence="1" type="primary">rsmF</name>
    <name type="ordered locus">SDY_1986</name>
</gene>
<keyword id="KW-0963">Cytoplasm</keyword>
<keyword id="KW-0489">Methyltransferase</keyword>
<keyword id="KW-1185">Reference proteome</keyword>
<keyword id="KW-0694">RNA-binding</keyword>
<keyword id="KW-0698">rRNA processing</keyword>
<keyword id="KW-0949">S-adenosyl-L-methionine</keyword>
<keyword id="KW-0808">Transferase</keyword>
<feature type="chain" id="PRO_0000285018" description="Ribosomal RNA small subunit methyltransferase F">
    <location>
        <begin position="1"/>
        <end position="479"/>
    </location>
</feature>
<feature type="active site" description="Nucleophile" evidence="1">
    <location>
        <position position="247"/>
    </location>
</feature>
<feature type="binding site" evidence="1">
    <location>
        <begin position="125"/>
        <end position="131"/>
    </location>
    <ligand>
        <name>S-adenosyl-L-methionine</name>
        <dbReference type="ChEBI" id="CHEBI:59789"/>
    </ligand>
</feature>
<feature type="binding site" evidence="1">
    <location>
        <position position="149"/>
    </location>
    <ligand>
        <name>S-adenosyl-L-methionine</name>
        <dbReference type="ChEBI" id="CHEBI:59789"/>
    </ligand>
</feature>
<feature type="binding site" evidence="1">
    <location>
        <position position="176"/>
    </location>
    <ligand>
        <name>S-adenosyl-L-methionine</name>
        <dbReference type="ChEBI" id="CHEBI:59789"/>
    </ligand>
</feature>
<feature type="binding site" evidence="1">
    <location>
        <position position="194"/>
    </location>
    <ligand>
        <name>S-adenosyl-L-methionine</name>
        <dbReference type="ChEBI" id="CHEBI:59789"/>
    </ligand>
</feature>
<sequence length="479" mass="53384">MAQHTVYFPDAFLTQMREAMPSTPSFDDFLAACQRPLRRSIRVNTLKISVADFLRLTAPYGWTLTPIPWCEEGFWIERDNEDALPLGSTAEHLSGLFYIQEASSMLPVAALFADGNAPQRVMDIAAAPGSKTTQIAARMNNEGTILANEFSASRVKVLHANISRCGISNVALTHFDGRVFGAAVPEMFDAILLDAPCSGEGVVRKDPDALKNWSPESNQEIAATQRELIDSAFHALRLGGTLVYSTCTLNREENEAVCLWLKETYPDAVEFLPLGDLFPGTNKALTEEGFLHVFPQIYDCEGFFVARLRKTQAIPALPTPKYKVGNFPFSPVKDREAGQIRQAAASVGLNWDENLRPWQRDKELWLFPVGIEALIGKVRFSRLGIKLAETHNKGYRWQHEAVIALASPDNENAFELTPQEAEEWYRGRDVYPQAAPVADDVLVTFQHQPIGLAKRIGSRLKNSYPRELVRDGKLFTSNA</sequence>
<accession>Q32F19</accession>
<proteinExistence type="inferred from homology"/>
<protein>
    <recommendedName>
        <fullName evidence="1">Ribosomal RNA small subunit methyltransferase F</fullName>
        <ecNumber evidence="1">2.1.1.178</ecNumber>
    </recommendedName>
    <alternativeName>
        <fullName evidence="1">16S rRNA m5C1407 methyltransferase</fullName>
    </alternativeName>
    <alternativeName>
        <fullName evidence="1">rRNA (cytosine-C(5)-)-methyltransferase RsmF</fullName>
    </alternativeName>
</protein>
<dbReference type="EC" id="2.1.1.178" evidence="1"/>
<dbReference type="EMBL" id="CP000034">
    <property type="protein sequence ID" value="ABB62086.1"/>
    <property type="status" value="ALT_INIT"/>
    <property type="molecule type" value="Genomic_DNA"/>
</dbReference>
<dbReference type="RefSeq" id="WP_005022196.1">
    <property type="nucleotide sequence ID" value="NC_007606.1"/>
</dbReference>
<dbReference type="RefSeq" id="YP_403577.1">
    <property type="nucleotide sequence ID" value="NC_007606.1"/>
</dbReference>
<dbReference type="SMR" id="Q32F19"/>
<dbReference type="STRING" id="300267.SDY_1986"/>
<dbReference type="EnsemblBacteria" id="ABB62086">
    <property type="protein sequence ID" value="ABB62086"/>
    <property type="gene ID" value="SDY_1986"/>
</dbReference>
<dbReference type="KEGG" id="sdy:SDY_1986"/>
<dbReference type="PATRIC" id="fig|300267.13.peg.2397"/>
<dbReference type="HOGENOM" id="CLU_005316_6_2_6"/>
<dbReference type="Proteomes" id="UP000002716">
    <property type="component" value="Chromosome"/>
</dbReference>
<dbReference type="GO" id="GO:0005737">
    <property type="term" value="C:cytoplasm"/>
    <property type="evidence" value="ECO:0007669"/>
    <property type="project" value="UniProtKB-SubCell"/>
</dbReference>
<dbReference type="GO" id="GO:0003723">
    <property type="term" value="F:RNA binding"/>
    <property type="evidence" value="ECO:0007669"/>
    <property type="project" value="UniProtKB-KW"/>
</dbReference>
<dbReference type="GO" id="GO:0009383">
    <property type="term" value="F:rRNA (cytosine-C5-)-methyltransferase activity"/>
    <property type="evidence" value="ECO:0007669"/>
    <property type="project" value="TreeGrafter"/>
</dbReference>
<dbReference type="GO" id="GO:0070475">
    <property type="term" value="P:rRNA base methylation"/>
    <property type="evidence" value="ECO:0007669"/>
    <property type="project" value="TreeGrafter"/>
</dbReference>
<dbReference type="FunFam" id="3.10.450.720:FF:000001">
    <property type="entry name" value="Ribosomal RNA small subunit methyltransferase F"/>
    <property type="match status" value="1"/>
</dbReference>
<dbReference type="FunFam" id="3.40.50.150:FF:000079">
    <property type="entry name" value="Ribosomal RNA small subunit methyltransferase F"/>
    <property type="match status" value="1"/>
</dbReference>
<dbReference type="Gene3D" id="3.10.450.720">
    <property type="match status" value="1"/>
</dbReference>
<dbReference type="Gene3D" id="3.40.50.150">
    <property type="entry name" value="Vaccinia Virus protein VP39"/>
    <property type="match status" value="1"/>
</dbReference>
<dbReference type="HAMAP" id="MF_01579">
    <property type="entry name" value="16SrRNA_methyltr_F"/>
    <property type="match status" value="1"/>
</dbReference>
<dbReference type="InterPro" id="IPR031341">
    <property type="entry name" value="Methyltr_RsmF_N"/>
</dbReference>
<dbReference type="InterPro" id="IPR049560">
    <property type="entry name" value="MeTrfase_RsmB-F_NOP2_cat"/>
</dbReference>
<dbReference type="InterPro" id="IPR001678">
    <property type="entry name" value="MeTrfase_RsmB-F_NOP2_dom"/>
</dbReference>
<dbReference type="InterPro" id="IPR027391">
    <property type="entry name" value="Nol1_Nop2_Fmu_2"/>
</dbReference>
<dbReference type="InterPro" id="IPR011023">
    <property type="entry name" value="Nop2p"/>
</dbReference>
<dbReference type="InterPro" id="IPR023267">
    <property type="entry name" value="RCMT"/>
</dbReference>
<dbReference type="InterPro" id="IPR023545">
    <property type="entry name" value="rRNA_ssu_MeTfrase_F"/>
</dbReference>
<dbReference type="InterPro" id="IPR018314">
    <property type="entry name" value="RsmB/NOL1/NOP2-like_CS"/>
</dbReference>
<dbReference type="InterPro" id="IPR029063">
    <property type="entry name" value="SAM-dependent_MTases_sf"/>
</dbReference>
<dbReference type="InterPro" id="IPR048457">
    <property type="entry name" value="YebU_pre-PUA_dom"/>
</dbReference>
<dbReference type="NCBIfam" id="TIGR00446">
    <property type="entry name" value="nop2p"/>
    <property type="match status" value="1"/>
</dbReference>
<dbReference type="NCBIfam" id="NF008898">
    <property type="entry name" value="PRK11933.1"/>
    <property type="match status" value="1"/>
</dbReference>
<dbReference type="PANTHER" id="PTHR22807:SF30">
    <property type="entry name" value="28S RRNA (CYTOSINE(4447)-C(5))-METHYLTRANSFERASE-RELATED"/>
    <property type="match status" value="1"/>
</dbReference>
<dbReference type="PANTHER" id="PTHR22807">
    <property type="entry name" value="NOP2 YEAST -RELATED NOL1/NOP2/FMU SUN DOMAIN-CONTAINING"/>
    <property type="match status" value="1"/>
</dbReference>
<dbReference type="Pfam" id="PF01189">
    <property type="entry name" value="Methyltr_RsmB-F"/>
    <property type="match status" value="1"/>
</dbReference>
<dbReference type="Pfam" id="PF17125">
    <property type="entry name" value="Methyltr_RsmF_N"/>
    <property type="match status" value="1"/>
</dbReference>
<dbReference type="Pfam" id="PF13636">
    <property type="entry name" value="Methyltranf_PUA"/>
    <property type="match status" value="1"/>
</dbReference>
<dbReference type="Pfam" id="PF21150">
    <property type="entry name" value="YebU_pre-PUA_dom"/>
    <property type="match status" value="1"/>
</dbReference>
<dbReference type="PRINTS" id="PR02008">
    <property type="entry name" value="RCMTFAMILY"/>
</dbReference>
<dbReference type="SUPFAM" id="SSF53335">
    <property type="entry name" value="S-adenosyl-L-methionine-dependent methyltransferases"/>
    <property type="match status" value="1"/>
</dbReference>
<dbReference type="PROSITE" id="PS01153">
    <property type="entry name" value="NOL1_NOP2_SUN"/>
    <property type="match status" value="1"/>
</dbReference>
<dbReference type="PROSITE" id="PS51686">
    <property type="entry name" value="SAM_MT_RSMB_NOP"/>
    <property type="match status" value="1"/>
</dbReference>
<name>RSMF_SHIDS</name>
<reference key="1">
    <citation type="journal article" date="2005" name="Nucleic Acids Res.">
        <title>Genome dynamics and diversity of Shigella species, the etiologic agents of bacillary dysentery.</title>
        <authorList>
            <person name="Yang F."/>
            <person name="Yang J."/>
            <person name="Zhang X."/>
            <person name="Chen L."/>
            <person name="Jiang Y."/>
            <person name="Yan Y."/>
            <person name="Tang X."/>
            <person name="Wang J."/>
            <person name="Xiong Z."/>
            <person name="Dong J."/>
            <person name="Xue Y."/>
            <person name="Zhu Y."/>
            <person name="Xu X."/>
            <person name="Sun L."/>
            <person name="Chen S."/>
            <person name="Nie H."/>
            <person name="Peng J."/>
            <person name="Xu J."/>
            <person name="Wang Y."/>
            <person name="Yuan Z."/>
            <person name="Wen Y."/>
            <person name="Yao Z."/>
            <person name="Shen Y."/>
            <person name="Qiang B."/>
            <person name="Hou Y."/>
            <person name="Yu J."/>
            <person name="Jin Q."/>
        </authorList>
    </citation>
    <scope>NUCLEOTIDE SEQUENCE [LARGE SCALE GENOMIC DNA]</scope>
    <source>
        <strain>Sd197</strain>
    </source>
</reference>
<comment type="function">
    <text evidence="1">Specifically methylates the cytosine at position 1407 (m5C1407) of 16S rRNA.</text>
</comment>
<comment type="catalytic activity">
    <reaction evidence="1">
        <text>cytidine(1407) in 16S rRNA + S-adenosyl-L-methionine = 5-methylcytidine(1407) in 16S rRNA + S-adenosyl-L-homocysteine + H(+)</text>
        <dbReference type="Rhea" id="RHEA:42756"/>
        <dbReference type="Rhea" id="RHEA-COMP:10223"/>
        <dbReference type="Rhea" id="RHEA-COMP:10224"/>
        <dbReference type="ChEBI" id="CHEBI:15378"/>
        <dbReference type="ChEBI" id="CHEBI:57856"/>
        <dbReference type="ChEBI" id="CHEBI:59789"/>
        <dbReference type="ChEBI" id="CHEBI:74483"/>
        <dbReference type="ChEBI" id="CHEBI:82748"/>
        <dbReference type="EC" id="2.1.1.178"/>
    </reaction>
</comment>
<comment type="subcellular location">
    <subcellularLocation>
        <location evidence="1">Cytoplasm</location>
    </subcellularLocation>
</comment>
<comment type="similarity">
    <text evidence="1">Belongs to the class I-like SAM-binding methyltransferase superfamily. RsmB/NOP family.</text>
</comment>
<comment type="sequence caution" evidence="2">
    <conflict type="erroneous initiation">
        <sequence resource="EMBL-CDS" id="ABB62086"/>
    </conflict>
</comment>
<evidence type="ECO:0000255" key="1">
    <source>
        <dbReference type="HAMAP-Rule" id="MF_01579"/>
    </source>
</evidence>
<evidence type="ECO:0000305" key="2"/>
<organism>
    <name type="scientific">Shigella dysenteriae serotype 1 (strain Sd197)</name>
    <dbReference type="NCBI Taxonomy" id="300267"/>
    <lineage>
        <taxon>Bacteria</taxon>
        <taxon>Pseudomonadati</taxon>
        <taxon>Pseudomonadota</taxon>
        <taxon>Gammaproteobacteria</taxon>
        <taxon>Enterobacterales</taxon>
        <taxon>Enterobacteriaceae</taxon>
        <taxon>Shigella</taxon>
    </lineage>
</organism>